<gene>
    <name type="ORF">SPBC839.02</name>
</gene>
<dbReference type="EMBL" id="CU329671">
    <property type="protein sequence ID" value="CAB46695.1"/>
    <property type="status" value="ALT_SEQ"/>
    <property type="molecule type" value="Genomic_DNA"/>
</dbReference>
<dbReference type="PIR" id="T40709">
    <property type="entry name" value="T40709"/>
</dbReference>
<dbReference type="BioGRID" id="277719">
    <property type="interactions" value="29"/>
</dbReference>
<dbReference type="FunCoup" id="Q8WZK5">
    <property type="interactions" value="415"/>
</dbReference>
<dbReference type="STRING" id="284812.Q8WZK5"/>
<dbReference type="iPTMnet" id="Q8WZK5"/>
<dbReference type="PaxDb" id="4896-SPBC839.02.1"/>
<dbReference type="EnsemblFungi" id="SPBC839.02.1">
    <property type="protein sequence ID" value="SPBC839.02.1:pep"/>
    <property type="gene ID" value="SPBC839.02"/>
</dbReference>
<dbReference type="PomBase" id="SPBC839.02"/>
<dbReference type="VEuPathDB" id="FungiDB:SPBC839.02"/>
<dbReference type="eggNOG" id="KOG3780">
    <property type="taxonomic scope" value="Eukaryota"/>
</dbReference>
<dbReference type="HOGENOM" id="CLU_008578_0_1_1"/>
<dbReference type="InParanoid" id="Q8WZK5"/>
<dbReference type="Reactome" id="R-SPO-844456">
    <property type="pathway name" value="The NLRP3 inflammasome"/>
</dbReference>
<dbReference type="PRO" id="PR:Q8WZK5"/>
<dbReference type="Proteomes" id="UP000002485">
    <property type="component" value="Chromosome II"/>
</dbReference>
<dbReference type="GO" id="GO:0005737">
    <property type="term" value="C:cytoplasm"/>
    <property type="evidence" value="ECO:0000318"/>
    <property type="project" value="GO_Central"/>
</dbReference>
<dbReference type="GO" id="GO:0005829">
    <property type="term" value="C:cytosol"/>
    <property type="evidence" value="ECO:0000318"/>
    <property type="project" value="GO_Central"/>
</dbReference>
<dbReference type="GO" id="GO:0005509">
    <property type="term" value="F:calcium ion binding"/>
    <property type="evidence" value="ECO:0000255"/>
    <property type="project" value="PomBase"/>
</dbReference>
<dbReference type="GO" id="GO:0030674">
    <property type="term" value="F:protein-macromolecule adaptor activity"/>
    <property type="evidence" value="ECO:0000318"/>
    <property type="project" value="GO_Central"/>
</dbReference>
<dbReference type="GO" id="GO:0031625">
    <property type="term" value="F:ubiquitin protein ligase binding"/>
    <property type="evidence" value="ECO:0000318"/>
    <property type="project" value="GO_Central"/>
</dbReference>
<dbReference type="GO" id="GO:0072583">
    <property type="term" value="P:clathrin-dependent endocytosis"/>
    <property type="evidence" value="ECO:0000266"/>
    <property type="project" value="PomBase"/>
</dbReference>
<dbReference type="GO" id="GO:0070086">
    <property type="term" value="P:ubiquitin-dependent endocytosis"/>
    <property type="evidence" value="ECO:0000318"/>
    <property type="project" value="GO_Central"/>
</dbReference>
<dbReference type="FunFam" id="2.60.40.640:FF:000086">
    <property type="entry name" value="Putative arrestin-related trafficking adapter SPBC839.02"/>
    <property type="match status" value="1"/>
</dbReference>
<dbReference type="Gene3D" id="2.60.40.640">
    <property type="match status" value="1"/>
</dbReference>
<dbReference type="InterPro" id="IPR014752">
    <property type="entry name" value="Arrestin-like_C"/>
</dbReference>
<dbReference type="InterPro" id="IPR011021">
    <property type="entry name" value="Arrestin-like_N"/>
</dbReference>
<dbReference type="InterPro" id="IPR011022">
    <property type="entry name" value="Arrestin_C-like"/>
</dbReference>
<dbReference type="InterPro" id="IPR050357">
    <property type="entry name" value="Arrestin_domain-protein"/>
</dbReference>
<dbReference type="InterPro" id="IPR014756">
    <property type="entry name" value="Ig_E-set"/>
</dbReference>
<dbReference type="PANTHER" id="PTHR11188">
    <property type="entry name" value="ARRESTIN DOMAIN CONTAINING PROTEIN"/>
    <property type="match status" value="1"/>
</dbReference>
<dbReference type="PANTHER" id="PTHR11188:SF174">
    <property type="entry name" value="ARRESTIN-RELATED TRAFFICKING ADAPTER 10-RELATED"/>
    <property type="match status" value="1"/>
</dbReference>
<dbReference type="Pfam" id="PF02752">
    <property type="entry name" value="Arrestin_C"/>
    <property type="match status" value="1"/>
</dbReference>
<dbReference type="Pfam" id="PF00339">
    <property type="entry name" value="Arrestin_N"/>
    <property type="match status" value="1"/>
</dbReference>
<dbReference type="SMART" id="SM01017">
    <property type="entry name" value="Arrestin_C"/>
    <property type="match status" value="1"/>
</dbReference>
<dbReference type="SUPFAM" id="SSF81296">
    <property type="entry name" value="E set domains"/>
    <property type="match status" value="1"/>
</dbReference>
<reference key="1">
    <citation type="journal article" date="2002" name="Nature">
        <title>The genome sequence of Schizosaccharomyces pombe.</title>
        <authorList>
            <person name="Wood V."/>
            <person name="Gwilliam R."/>
            <person name="Rajandream M.A."/>
            <person name="Lyne M.H."/>
            <person name="Lyne R."/>
            <person name="Stewart A."/>
            <person name="Sgouros J.G."/>
            <person name="Peat N."/>
            <person name="Hayles J."/>
            <person name="Baker S.G."/>
            <person name="Basham D."/>
            <person name="Bowman S."/>
            <person name="Brooks K."/>
            <person name="Brown D."/>
            <person name="Brown S."/>
            <person name="Chillingworth T."/>
            <person name="Churcher C.M."/>
            <person name="Collins M."/>
            <person name="Connor R."/>
            <person name="Cronin A."/>
            <person name="Davis P."/>
            <person name="Feltwell T."/>
            <person name="Fraser A."/>
            <person name="Gentles S."/>
            <person name="Goble A."/>
            <person name="Hamlin N."/>
            <person name="Harris D.E."/>
            <person name="Hidalgo J."/>
            <person name="Hodgson G."/>
            <person name="Holroyd S."/>
            <person name="Hornsby T."/>
            <person name="Howarth S."/>
            <person name="Huckle E.J."/>
            <person name="Hunt S."/>
            <person name="Jagels K."/>
            <person name="James K.D."/>
            <person name="Jones L."/>
            <person name="Jones M."/>
            <person name="Leather S."/>
            <person name="McDonald S."/>
            <person name="McLean J."/>
            <person name="Mooney P."/>
            <person name="Moule S."/>
            <person name="Mungall K.L."/>
            <person name="Murphy L.D."/>
            <person name="Niblett D."/>
            <person name="Odell C."/>
            <person name="Oliver K."/>
            <person name="O'Neil S."/>
            <person name="Pearson D."/>
            <person name="Quail M.A."/>
            <person name="Rabbinowitsch E."/>
            <person name="Rutherford K.M."/>
            <person name="Rutter S."/>
            <person name="Saunders D."/>
            <person name="Seeger K."/>
            <person name="Sharp S."/>
            <person name="Skelton J."/>
            <person name="Simmonds M.N."/>
            <person name="Squares R."/>
            <person name="Squares S."/>
            <person name="Stevens K."/>
            <person name="Taylor K."/>
            <person name="Taylor R.G."/>
            <person name="Tivey A."/>
            <person name="Walsh S.V."/>
            <person name="Warren T."/>
            <person name="Whitehead S."/>
            <person name="Woodward J.R."/>
            <person name="Volckaert G."/>
            <person name="Aert R."/>
            <person name="Robben J."/>
            <person name="Grymonprez B."/>
            <person name="Weltjens I."/>
            <person name="Vanstreels E."/>
            <person name="Rieger M."/>
            <person name="Schaefer M."/>
            <person name="Mueller-Auer S."/>
            <person name="Gabel C."/>
            <person name="Fuchs M."/>
            <person name="Duesterhoeft A."/>
            <person name="Fritzc C."/>
            <person name="Holzer E."/>
            <person name="Moestl D."/>
            <person name="Hilbert H."/>
            <person name="Borzym K."/>
            <person name="Langer I."/>
            <person name="Beck A."/>
            <person name="Lehrach H."/>
            <person name="Reinhardt R."/>
            <person name="Pohl T.M."/>
            <person name="Eger P."/>
            <person name="Zimmermann W."/>
            <person name="Wedler H."/>
            <person name="Wambutt R."/>
            <person name="Purnelle B."/>
            <person name="Goffeau A."/>
            <person name="Cadieu E."/>
            <person name="Dreano S."/>
            <person name="Gloux S."/>
            <person name="Lelaure V."/>
            <person name="Mottier S."/>
            <person name="Galibert F."/>
            <person name="Aves S.J."/>
            <person name="Xiang Z."/>
            <person name="Hunt C."/>
            <person name="Moore K."/>
            <person name="Hurst S.M."/>
            <person name="Lucas M."/>
            <person name="Rochet M."/>
            <person name="Gaillardin C."/>
            <person name="Tallada V.A."/>
            <person name="Garzon A."/>
            <person name="Thode G."/>
            <person name="Daga R.R."/>
            <person name="Cruzado L."/>
            <person name="Jimenez J."/>
            <person name="Sanchez M."/>
            <person name="del Rey F."/>
            <person name="Benito J."/>
            <person name="Dominguez A."/>
            <person name="Revuelta J.L."/>
            <person name="Moreno S."/>
            <person name="Armstrong J."/>
            <person name="Forsburg S.L."/>
            <person name="Cerutti L."/>
            <person name="Lowe T."/>
            <person name="McCombie W.R."/>
            <person name="Paulsen I."/>
            <person name="Potashkin J."/>
            <person name="Shpakovski G.V."/>
            <person name="Ussery D."/>
            <person name="Barrell B.G."/>
            <person name="Nurse P."/>
        </authorList>
    </citation>
    <scope>NUCLEOTIDE SEQUENCE [LARGE SCALE GENOMIC DNA]</scope>
    <source>
        <strain>972 / ATCC 24843</strain>
    </source>
</reference>
<reference key="2">
    <citation type="journal article" date="2014" name="Nat. Struct. Mol. Biol.">
        <title>The translational landscape of fission-yeast meiosis and sporulation.</title>
        <authorList>
            <person name="Duncan C.D."/>
            <person name="Mata J."/>
        </authorList>
    </citation>
    <scope>GENE MODEL REVISION</scope>
</reference>
<accession>Q8WZK5</accession>
<feature type="chain" id="PRO_0000353798" description="Putative arrestin-related trafficking adapter SPBC839.02">
    <location>
        <begin position="1"/>
        <end position="504"/>
    </location>
</feature>
<feature type="region of interest" description="Disordered" evidence="2">
    <location>
        <begin position="481"/>
        <end position="504"/>
    </location>
</feature>
<keyword id="KW-1185">Reference proteome</keyword>
<protein>
    <recommendedName>
        <fullName>Putative arrestin-related trafficking adapter SPBC839.02</fullName>
    </recommendedName>
</protein>
<name>ALY1_SCHPO</name>
<organism>
    <name type="scientific">Schizosaccharomyces pombe (strain 972 / ATCC 24843)</name>
    <name type="common">Fission yeast</name>
    <dbReference type="NCBI Taxonomy" id="284812"/>
    <lineage>
        <taxon>Eukaryota</taxon>
        <taxon>Fungi</taxon>
        <taxon>Dikarya</taxon>
        <taxon>Ascomycota</taxon>
        <taxon>Taphrinomycotina</taxon>
        <taxon>Schizosaccharomycetes</taxon>
        <taxon>Schizosaccharomycetales</taxon>
        <taxon>Schizosaccharomycetaceae</taxon>
        <taxon>Schizosaccharomyces</taxon>
    </lineage>
</organism>
<comment type="function">
    <text evidence="1">May regulate endocytosis in response to extracellular stimuli.</text>
</comment>
<comment type="similarity">
    <text evidence="3">Belongs to the ALY1 family.</text>
</comment>
<comment type="sequence caution" evidence="3">
    <conflict type="erroneous gene model prediction">
        <sequence resource="EMBL-CDS" id="CAB46695"/>
    </conflict>
</comment>
<evidence type="ECO:0000250" key="1"/>
<evidence type="ECO:0000256" key="2">
    <source>
        <dbReference type="SAM" id="MobiDB-lite"/>
    </source>
</evidence>
<evidence type="ECO:0000305" key="3"/>
<sequence>MYIPNLRNYHDKVFPYGPSSNGYNPVIRLTDRTTQPDPSQHIYQEEKISKCEGLSYRAREWLLLSSNSNARVAIALAEPVLYLPGATSSEIQSEHSAVLRGSLCIQIYKPVKLKKIQLSFKGKSRTEWPEGIPPKLFDTYEENSIMNHCWVFFHSEQKVDENSHGAVWYKVLPHYADTAHYPRSMECFYPGEYVYNFELPISCTYPESIQTDMGRVYYFLETLVDRSSTFSGKSTGRIPIELIRSPCSTSVATSEPILVSKSWEDRLHYEVQVGEKCVVMGQVVPVNFKFTLLGEVKFHKLRLFLMERRYYYCRQRSVRRKEKTRQLLLYERSAPKNQCLLSDWKQVRPDVYELSDQVRIPGCHDMAANIVHFDTTYPNIKITHTVRTVLRFSCENSPELMGSAKYLEIYIDSPVRLLSCRCSDGSTMLPAYCPIIPSSEVNFCSIDNRIIAGMNRDLALDSDIIGNSPPSFDSWTAVPYQAPPPKYDDIFQSGSSHDENHDDN</sequence>
<proteinExistence type="inferred from homology"/>